<evidence type="ECO:0000250" key="1"/>
<evidence type="ECO:0000269" key="2">
    <source>
    </source>
</evidence>
<evidence type="ECO:0000269" key="3">
    <source>
    </source>
</evidence>
<evidence type="ECO:0000305" key="4"/>
<gene>
    <name type="primary">whiB7</name>
    <name type="ordered locus">MT3290.1</name>
</gene>
<protein>
    <recommendedName>
        <fullName>Probable transcriptional regulator WhiB7</fullName>
    </recommendedName>
</protein>
<keyword id="KW-0004">4Fe-4S</keyword>
<keyword id="KW-0963">Cytoplasm</keyword>
<keyword id="KW-1015">Disulfide bond</keyword>
<keyword id="KW-0238">DNA-binding</keyword>
<keyword id="KW-0408">Iron</keyword>
<keyword id="KW-0411">Iron-sulfur</keyword>
<keyword id="KW-0479">Metal-binding</keyword>
<keyword id="KW-1185">Reference proteome</keyword>
<keyword id="KW-0804">Transcription</keyword>
<keyword id="KW-0805">Transcription regulation</keyword>
<feature type="chain" id="PRO_0000420388" description="Probable transcriptional regulator WhiB7">
    <location>
        <begin position="1"/>
        <end position="92"/>
    </location>
</feature>
<feature type="domain" description="4Fe-4S Wbl-type">
    <location>
        <begin position="19"/>
        <end position="76"/>
    </location>
</feature>
<feature type="DNA-binding region" description="A.T hook">
    <location>
        <begin position="80"/>
        <end position="91"/>
    </location>
</feature>
<feature type="binding site" evidence="1">
    <location>
        <position position="20"/>
    </location>
    <ligand>
        <name>[4Fe-4S] cluster</name>
        <dbReference type="ChEBI" id="CHEBI:49883"/>
    </ligand>
</feature>
<feature type="binding site" evidence="1">
    <location>
        <position position="43"/>
    </location>
    <ligand>
        <name>[4Fe-4S] cluster</name>
        <dbReference type="ChEBI" id="CHEBI:49883"/>
    </ligand>
</feature>
<feature type="binding site" evidence="1">
    <location>
        <position position="46"/>
    </location>
    <ligand>
        <name>[4Fe-4S] cluster</name>
        <dbReference type="ChEBI" id="CHEBI:49883"/>
    </ligand>
</feature>
<feature type="binding site" evidence="1">
    <location>
        <position position="52"/>
    </location>
    <ligand>
        <name>[4Fe-4S] cluster</name>
        <dbReference type="ChEBI" id="CHEBI:49883"/>
    </ligand>
</feature>
<organism>
    <name type="scientific">Mycobacterium tuberculosis (strain CDC 1551 / Oshkosh)</name>
    <dbReference type="NCBI Taxonomy" id="83331"/>
    <lineage>
        <taxon>Bacteria</taxon>
        <taxon>Bacillati</taxon>
        <taxon>Actinomycetota</taxon>
        <taxon>Actinomycetes</taxon>
        <taxon>Mycobacteriales</taxon>
        <taxon>Mycobacteriaceae</taxon>
        <taxon>Mycobacterium</taxon>
        <taxon>Mycobacterium tuberculosis complex</taxon>
    </lineage>
</organism>
<accession>Q8VJ53</accession>
<name>WHB7B_MYCTO</name>
<dbReference type="EMBL" id="AE000516">
    <property type="protein sequence ID" value="AAK47632.1"/>
    <property type="status" value="ALT_INIT"/>
    <property type="molecule type" value="Genomic_DNA"/>
</dbReference>
<dbReference type="RefSeq" id="WP_003899963.1">
    <property type="nucleotide sequence ID" value="NZ_KK341227.1"/>
</dbReference>
<dbReference type="SMR" id="Q8VJ53"/>
<dbReference type="GeneID" id="45427187"/>
<dbReference type="KEGG" id="mtc:MT3290.1"/>
<dbReference type="PATRIC" id="fig|83331.31.peg.3542"/>
<dbReference type="HOGENOM" id="CLU_106245_3_1_11"/>
<dbReference type="Proteomes" id="UP000001020">
    <property type="component" value="Chromosome"/>
</dbReference>
<dbReference type="GO" id="GO:0005737">
    <property type="term" value="C:cytoplasm"/>
    <property type="evidence" value="ECO:0007669"/>
    <property type="project" value="UniProtKB-SubCell"/>
</dbReference>
<dbReference type="GO" id="GO:0051539">
    <property type="term" value="F:4 iron, 4 sulfur cluster binding"/>
    <property type="evidence" value="ECO:0007669"/>
    <property type="project" value="UniProtKB-UniRule"/>
</dbReference>
<dbReference type="GO" id="GO:0035731">
    <property type="term" value="F:dinitrosyl-iron complex binding"/>
    <property type="evidence" value="ECO:0007669"/>
    <property type="project" value="UniProtKB-UniRule"/>
</dbReference>
<dbReference type="GO" id="GO:0003677">
    <property type="term" value="F:DNA binding"/>
    <property type="evidence" value="ECO:0007669"/>
    <property type="project" value="UniProtKB-UniRule"/>
</dbReference>
<dbReference type="GO" id="GO:0046872">
    <property type="term" value="F:metal ion binding"/>
    <property type="evidence" value="ECO:0007669"/>
    <property type="project" value="UniProtKB-KW"/>
</dbReference>
<dbReference type="GO" id="GO:0047134">
    <property type="term" value="F:protein-disulfide reductase [NAD(P)H] activity"/>
    <property type="evidence" value="ECO:0007669"/>
    <property type="project" value="TreeGrafter"/>
</dbReference>
<dbReference type="GO" id="GO:0045454">
    <property type="term" value="P:cell redox homeostasis"/>
    <property type="evidence" value="ECO:0007669"/>
    <property type="project" value="TreeGrafter"/>
</dbReference>
<dbReference type="GO" id="GO:0045892">
    <property type="term" value="P:negative regulation of DNA-templated transcription"/>
    <property type="evidence" value="ECO:0007669"/>
    <property type="project" value="TreeGrafter"/>
</dbReference>
<dbReference type="HAMAP" id="MF_01479">
    <property type="entry name" value="WhiB"/>
    <property type="match status" value="1"/>
</dbReference>
<dbReference type="InterPro" id="IPR034768">
    <property type="entry name" value="4FE4S_WBL"/>
</dbReference>
<dbReference type="InterPro" id="IPR017956">
    <property type="entry name" value="AT_hook_DNA-bd_motif"/>
</dbReference>
<dbReference type="InterPro" id="IPR003482">
    <property type="entry name" value="Whib"/>
</dbReference>
<dbReference type="PANTHER" id="PTHR38839:SF2">
    <property type="entry name" value="TRANSCRIPTIONAL REGULATOR WHIB7-RELATED"/>
    <property type="match status" value="1"/>
</dbReference>
<dbReference type="PANTHER" id="PTHR38839">
    <property type="entry name" value="TRANSCRIPTIONAL REGULATOR WHID-RELATED"/>
    <property type="match status" value="1"/>
</dbReference>
<dbReference type="Pfam" id="PF02178">
    <property type="entry name" value="AT_hook"/>
    <property type="match status" value="1"/>
</dbReference>
<dbReference type="Pfam" id="PF02467">
    <property type="entry name" value="Whib"/>
    <property type="match status" value="1"/>
</dbReference>
<dbReference type="PROSITE" id="PS51674">
    <property type="entry name" value="4FE4S_WBL"/>
    <property type="match status" value="1"/>
</dbReference>
<proteinExistence type="evidence at transcript level"/>
<reference key="1">
    <citation type="journal article" date="2002" name="J. Bacteriol.">
        <title>Whole-genome comparison of Mycobacterium tuberculosis clinical and laboratory strains.</title>
        <authorList>
            <person name="Fleischmann R.D."/>
            <person name="Alland D."/>
            <person name="Eisen J.A."/>
            <person name="Carpenter L."/>
            <person name="White O."/>
            <person name="Peterson J.D."/>
            <person name="DeBoy R.T."/>
            <person name="Dodson R.J."/>
            <person name="Gwinn M.L."/>
            <person name="Haft D.H."/>
            <person name="Hickey E.K."/>
            <person name="Kolonay J.F."/>
            <person name="Nelson W.C."/>
            <person name="Umayam L.A."/>
            <person name="Ermolaeva M.D."/>
            <person name="Salzberg S.L."/>
            <person name="Delcher A."/>
            <person name="Utterback T.R."/>
            <person name="Weidman J.F."/>
            <person name="Khouri H.M."/>
            <person name="Gill J."/>
            <person name="Mikula A."/>
            <person name="Bishai W."/>
            <person name="Jacobs W.R. Jr."/>
            <person name="Venter J.C."/>
            <person name="Fraser C.M."/>
        </authorList>
    </citation>
    <scope>NUCLEOTIDE SEQUENCE [LARGE SCALE GENOMIC DNA]</scope>
    <source>
        <strain>CDC 1551 / Oshkosh</strain>
    </source>
</reference>
<reference key="2">
    <citation type="journal article" date="2006" name="Antimicrob. Agents Chemother.">
        <title>Differential gene expression in response to exposure to antimycobacterial agents and other stress conditions among seven Mycobacterium tuberculosis whiB-like genes.</title>
        <authorList>
            <person name="Geiman D.E."/>
            <person name="Raghunand T.R."/>
            <person name="Agarwal N."/>
            <person name="Bishai W.R."/>
        </authorList>
    </citation>
    <scope>INDUCTION</scope>
    <source>
        <strain>CDC 1551 / Oshkosh</strain>
    </source>
</reference>
<reference key="3">
    <citation type="journal article" date="2012" name="PLoS ONE">
        <title>Gene expression of Mycobacterium tuberculosis putative transcription factors whiB1-7 in redox environments.</title>
        <authorList>
            <person name="Larsson C."/>
            <person name="Luna B."/>
            <person name="Ammerman N.C."/>
            <person name="Maiga M."/>
            <person name="Agarwal N."/>
            <person name="Bishai W.R."/>
        </authorList>
    </citation>
    <scope>INDUCTION</scope>
    <source>
        <strain>CDC 1551 / Oshkosh</strain>
    </source>
</reference>
<sequence>MSVLTVPRQTPRQRLPVLPCHVGDPDLWFADTPAGLEVAKTLCVSCPIRRQCLAAALQRAEPWGVWGGEIFDQGSIVSHKRPRGRPRKDAVA</sequence>
<comment type="function">
    <text evidence="1">Acts as a transcriptional regulator. Probably redox-responsive. The apo- but not holo-form probably binds DNA (By similarity).</text>
</comment>
<comment type="cofactor">
    <cofactor evidence="1">
        <name>[4Fe-4S] cluster</name>
        <dbReference type="ChEBI" id="CHEBI:49883"/>
    </cofactor>
    <text evidence="1">Binds 1 [4Fe-4S] cluster per subunit. Following nitrosylation of the [4Fe-4S] cluster binds 1 [4Fe-8(NO)] cluster per subunit.</text>
</comment>
<comment type="subcellular location">
    <subcellularLocation>
        <location evidence="1">Cytoplasm</location>
    </subcellularLocation>
</comment>
<comment type="induction">
    <text evidence="2 3">Weakly expressed in exponential phase, expression peaks as cells enter stationary phase then falls again. 30-fold induced by iron-starvation, 60-fold by heat shock, 70-fold by streptomycin and kanamycin. 2-fold repressed by ethanol and streptomycin. Slightly induced during entry into hypoxia, by NO, cAMP, in mouse infections and 15-fold induced in macrophage infection.</text>
</comment>
<comment type="PTM">
    <text evidence="1">The Fe-S cluster can be nitrosylated by nitric oxide (NO).</text>
</comment>
<comment type="PTM">
    <text evidence="1">Upon Fe-S cluster removal intramolecular disulfide bonds are formed.</text>
</comment>
<comment type="similarity">
    <text evidence="4">Belongs to the WhiB family.</text>
</comment>
<comment type="sequence caution" evidence="4">
    <conflict type="erroneous initiation">
        <sequence resource="EMBL-CDS" id="AAK47632"/>
    </conflict>
    <text>Extended N-terminus.</text>
</comment>